<proteinExistence type="inferred from homology"/>
<comment type="similarity">
    <text evidence="1">Belongs to the bacterial ribosomal protein bL27 family.</text>
</comment>
<accession>A6QB71</accession>
<feature type="chain" id="PRO_1000017627" description="Large ribosomal subunit protein bL27">
    <location>
        <begin position="1"/>
        <end position="84"/>
    </location>
</feature>
<feature type="region of interest" description="Disordered" evidence="2">
    <location>
        <begin position="1"/>
        <end position="25"/>
    </location>
</feature>
<evidence type="ECO:0000255" key="1">
    <source>
        <dbReference type="HAMAP-Rule" id="MF_00539"/>
    </source>
</evidence>
<evidence type="ECO:0000256" key="2">
    <source>
        <dbReference type="SAM" id="MobiDB-lite"/>
    </source>
</evidence>
<evidence type="ECO:0000305" key="3"/>
<gene>
    <name evidence="1" type="primary">rpmA</name>
    <name type="ordered locus">SUN_1783</name>
</gene>
<name>RL27_SULNB</name>
<organism>
    <name type="scientific">Sulfurovum sp. (strain NBC37-1)</name>
    <dbReference type="NCBI Taxonomy" id="387093"/>
    <lineage>
        <taxon>Bacteria</taxon>
        <taxon>Pseudomonadati</taxon>
        <taxon>Campylobacterota</taxon>
        <taxon>Epsilonproteobacteria</taxon>
        <taxon>Campylobacterales</taxon>
        <taxon>Sulfurovaceae</taxon>
        <taxon>Sulfurovum</taxon>
    </lineage>
</organism>
<protein>
    <recommendedName>
        <fullName evidence="1">Large ribosomal subunit protein bL27</fullName>
    </recommendedName>
    <alternativeName>
        <fullName evidence="3">50S ribosomal protein L27</fullName>
    </alternativeName>
</protein>
<dbReference type="EMBL" id="AP009179">
    <property type="protein sequence ID" value="BAF72730.1"/>
    <property type="molecule type" value="Genomic_DNA"/>
</dbReference>
<dbReference type="RefSeq" id="WP_012083540.1">
    <property type="nucleotide sequence ID" value="NC_009663.1"/>
</dbReference>
<dbReference type="SMR" id="A6QB71"/>
<dbReference type="STRING" id="387093.SUN_1783"/>
<dbReference type="KEGG" id="sun:SUN_1783"/>
<dbReference type="eggNOG" id="COG0211">
    <property type="taxonomic scope" value="Bacteria"/>
</dbReference>
<dbReference type="HOGENOM" id="CLU_095424_4_0_7"/>
<dbReference type="OrthoDB" id="9803474at2"/>
<dbReference type="Proteomes" id="UP000006378">
    <property type="component" value="Chromosome"/>
</dbReference>
<dbReference type="GO" id="GO:0022625">
    <property type="term" value="C:cytosolic large ribosomal subunit"/>
    <property type="evidence" value="ECO:0007669"/>
    <property type="project" value="TreeGrafter"/>
</dbReference>
<dbReference type="GO" id="GO:0003735">
    <property type="term" value="F:structural constituent of ribosome"/>
    <property type="evidence" value="ECO:0007669"/>
    <property type="project" value="InterPro"/>
</dbReference>
<dbReference type="GO" id="GO:0006412">
    <property type="term" value="P:translation"/>
    <property type="evidence" value="ECO:0007669"/>
    <property type="project" value="UniProtKB-UniRule"/>
</dbReference>
<dbReference type="FunFam" id="2.40.50.100:FF:000026">
    <property type="entry name" value="50S ribosomal protein L27"/>
    <property type="match status" value="1"/>
</dbReference>
<dbReference type="Gene3D" id="2.40.50.100">
    <property type="match status" value="1"/>
</dbReference>
<dbReference type="HAMAP" id="MF_00539">
    <property type="entry name" value="Ribosomal_bL27"/>
    <property type="match status" value="1"/>
</dbReference>
<dbReference type="InterPro" id="IPR001684">
    <property type="entry name" value="Ribosomal_bL27"/>
</dbReference>
<dbReference type="InterPro" id="IPR018261">
    <property type="entry name" value="Ribosomal_bL27_CS"/>
</dbReference>
<dbReference type="NCBIfam" id="TIGR00062">
    <property type="entry name" value="L27"/>
    <property type="match status" value="1"/>
</dbReference>
<dbReference type="PANTHER" id="PTHR15893:SF0">
    <property type="entry name" value="LARGE RIBOSOMAL SUBUNIT PROTEIN BL27M"/>
    <property type="match status" value="1"/>
</dbReference>
<dbReference type="PANTHER" id="PTHR15893">
    <property type="entry name" value="RIBOSOMAL PROTEIN L27"/>
    <property type="match status" value="1"/>
</dbReference>
<dbReference type="Pfam" id="PF01016">
    <property type="entry name" value="Ribosomal_L27"/>
    <property type="match status" value="1"/>
</dbReference>
<dbReference type="PRINTS" id="PR00063">
    <property type="entry name" value="RIBOSOMALL27"/>
</dbReference>
<dbReference type="SUPFAM" id="SSF110324">
    <property type="entry name" value="Ribosomal L27 protein-like"/>
    <property type="match status" value="1"/>
</dbReference>
<dbReference type="PROSITE" id="PS00831">
    <property type="entry name" value="RIBOSOMAL_L27"/>
    <property type="match status" value="1"/>
</dbReference>
<sequence length="84" mass="9095">MAHKKGQGSTQNNRDSAGRRLGVKKFGGEKVIPGNIIIRQRGTKVHPGNGVGMGKDHTIFAMVEGVVKFENRSRSQKRVSVVPA</sequence>
<reference key="1">
    <citation type="journal article" date="2007" name="Proc. Natl. Acad. Sci. U.S.A.">
        <title>Deep-sea vent epsilon-proteobacterial genomes provide insights into emergence of pathogens.</title>
        <authorList>
            <person name="Nakagawa S."/>
            <person name="Takaki Y."/>
            <person name="Shimamura S."/>
            <person name="Reysenbach A.-L."/>
            <person name="Takai K."/>
            <person name="Horikoshi K."/>
        </authorList>
    </citation>
    <scope>NUCLEOTIDE SEQUENCE [LARGE SCALE GENOMIC DNA]</scope>
    <source>
        <strain>NBC37-1</strain>
    </source>
</reference>
<keyword id="KW-0687">Ribonucleoprotein</keyword>
<keyword id="KW-0689">Ribosomal protein</keyword>